<accession>Q6G9L7</accession>
<comment type="subcellular location">
    <subcellularLocation>
        <location evidence="1">Cytoplasm</location>
    </subcellularLocation>
</comment>
<comment type="similarity">
    <text evidence="1">Belongs to the UPF0291 family.</text>
</comment>
<protein>
    <recommendedName>
        <fullName evidence="1">UPF0291 protein SAS1281</fullName>
    </recommendedName>
</protein>
<sequence length="79" mass="9203">MSNSDLNIERINELAKKKKEVGLTQEEAKEQTALRKAYLESFRKGFKQQIENTKVIDPEGNDVTPEKIKEIQQKRDNKN</sequence>
<gene>
    <name type="ordered locus">SAS1281</name>
</gene>
<name>Y1281_STAAS</name>
<reference key="1">
    <citation type="journal article" date="2004" name="Proc. Natl. Acad. Sci. U.S.A.">
        <title>Complete genomes of two clinical Staphylococcus aureus strains: evidence for the rapid evolution of virulence and drug resistance.</title>
        <authorList>
            <person name="Holden M.T.G."/>
            <person name="Feil E.J."/>
            <person name="Lindsay J.A."/>
            <person name="Peacock S.J."/>
            <person name="Day N.P.J."/>
            <person name="Enright M.C."/>
            <person name="Foster T.J."/>
            <person name="Moore C.E."/>
            <person name="Hurst L."/>
            <person name="Atkin R."/>
            <person name="Barron A."/>
            <person name="Bason N."/>
            <person name="Bentley S.D."/>
            <person name="Chillingworth C."/>
            <person name="Chillingworth T."/>
            <person name="Churcher C."/>
            <person name="Clark L."/>
            <person name="Corton C."/>
            <person name="Cronin A."/>
            <person name="Doggett J."/>
            <person name="Dowd L."/>
            <person name="Feltwell T."/>
            <person name="Hance Z."/>
            <person name="Harris B."/>
            <person name="Hauser H."/>
            <person name="Holroyd S."/>
            <person name="Jagels K."/>
            <person name="James K.D."/>
            <person name="Lennard N."/>
            <person name="Line A."/>
            <person name="Mayes R."/>
            <person name="Moule S."/>
            <person name="Mungall K."/>
            <person name="Ormond D."/>
            <person name="Quail M.A."/>
            <person name="Rabbinowitsch E."/>
            <person name="Rutherford K.M."/>
            <person name="Sanders M."/>
            <person name="Sharp S."/>
            <person name="Simmonds M."/>
            <person name="Stevens K."/>
            <person name="Whitehead S."/>
            <person name="Barrell B.G."/>
            <person name="Spratt B.G."/>
            <person name="Parkhill J."/>
        </authorList>
    </citation>
    <scope>NUCLEOTIDE SEQUENCE [LARGE SCALE GENOMIC DNA]</scope>
    <source>
        <strain>MSSA476</strain>
    </source>
</reference>
<feature type="chain" id="PRO_0000094991" description="UPF0291 protein SAS1281">
    <location>
        <begin position="1"/>
        <end position="79"/>
    </location>
</feature>
<feature type="region of interest" description="Disordered" evidence="2">
    <location>
        <begin position="56"/>
        <end position="79"/>
    </location>
</feature>
<feature type="compositionally biased region" description="Basic and acidic residues" evidence="2">
    <location>
        <begin position="64"/>
        <end position="79"/>
    </location>
</feature>
<dbReference type="EMBL" id="BX571857">
    <property type="protein sequence ID" value="CAG43059.1"/>
    <property type="molecule type" value="Genomic_DNA"/>
</dbReference>
<dbReference type="RefSeq" id="WP_000071351.1">
    <property type="nucleotide sequence ID" value="NC_002953.3"/>
</dbReference>
<dbReference type="SMR" id="Q6G9L7"/>
<dbReference type="KEGG" id="sas:SAS1281"/>
<dbReference type="HOGENOM" id="CLU_173137_0_2_9"/>
<dbReference type="GO" id="GO:0005737">
    <property type="term" value="C:cytoplasm"/>
    <property type="evidence" value="ECO:0007669"/>
    <property type="project" value="UniProtKB-SubCell"/>
</dbReference>
<dbReference type="Gene3D" id="1.10.287.540">
    <property type="entry name" value="Helix hairpin bin"/>
    <property type="match status" value="1"/>
</dbReference>
<dbReference type="HAMAP" id="MF_01103">
    <property type="entry name" value="UPF0291"/>
    <property type="match status" value="1"/>
</dbReference>
<dbReference type="InterPro" id="IPR009242">
    <property type="entry name" value="DUF896"/>
</dbReference>
<dbReference type="PANTHER" id="PTHR37300">
    <property type="entry name" value="UPF0291 PROTEIN CBO2609/CLC_2481"/>
    <property type="match status" value="1"/>
</dbReference>
<dbReference type="PANTHER" id="PTHR37300:SF1">
    <property type="entry name" value="UPF0291 PROTEIN YNZC"/>
    <property type="match status" value="1"/>
</dbReference>
<dbReference type="Pfam" id="PF05979">
    <property type="entry name" value="DUF896"/>
    <property type="match status" value="1"/>
</dbReference>
<dbReference type="SUPFAM" id="SSF158221">
    <property type="entry name" value="YnzC-like"/>
    <property type="match status" value="1"/>
</dbReference>
<proteinExistence type="inferred from homology"/>
<organism>
    <name type="scientific">Staphylococcus aureus (strain MSSA476)</name>
    <dbReference type="NCBI Taxonomy" id="282459"/>
    <lineage>
        <taxon>Bacteria</taxon>
        <taxon>Bacillati</taxon>
        <taxon>Bacillota</taxon>
        <taxon>Bacilli</taxon>
        <taxon>Bacillales</taxon>
        <taxon>Staphylococcaceae</taxon>
        <taxon>Staphylococcus</taxon>
    </lineage>
</organism>
<keyword id="KW-0963">Cytoplasm</keyword>
<evidence type="ECO:0000255" key="1">
    <source>
        <dbReference type="HAMAP-Rule" id="MF_01103"/>
    </source>
</evidence>
<evidence type="ECO:0000256" key="2">
    <source>
        <dbReference type="SAM" id="MobiDB-lite"/>
    </source>
</evidence>